<reference key="1">
    <citation type="journal article" date="2005" name="Proc. Natl. Acad. Sci. U.S.A.">
        <title>Genome analysis of multiple pathogenic isolates of Streptococcus agalactiae: implications for the microbial 'pan-genome'.</title>
        <authorList>
            <person name="Tettelin H."/>
            <person name="Masignani V."/>
            <person name="Cieslewicz M.J."/>
            <person name="Donati C."/>
            <person name="Medini D."/>
            <person name="Ward N.L."/>
            <person name="Angiuoli S.V."/>
            <person name="Crabtree J."/>
            <person name="Jones A.L."/>
            <person name="Durkin A.S."/>
            <person name="DeBoy R.T."/>
            <person name="Davidsen T.M."/>
            <person name="Mora M."/>
            <person name="Scarselli M."/>
            <person name="Margarit y Ros I."/>
            <person name="Peterson J.D."/>
            <person name="Hauser C.R."/>
            <person name="Sundaram J.P."/>
            <person name="Nelson W.C."/>
            <person name="Madupu R."/>
            <person name="Brinkac L.M."/>
            <person name="Dodson R.J."/>
            <person name="Rosovitz M.J."/>
            <person name="Sullivan S.A."/>
            <person name="Daugherty S.C."/>
            <person name="Haft D.H."/>
            <person name="Selengut J."/>
            <person name="Gwinn M.L."/>
            <person name="Zhou L."/>
            <person name="Zafar N."/>
            <person name="Khouri H."/>
            <person name="Radune D."/>
            <person name="Dimitrov G."/>
            <person name="Watkins K."/>
            <person name="O'Connor K.J."/>
            <person name="Smith S."/>
            <person name="Utterback T.R."/>
            <person name="White O."/>
            <person name="Rubens C.E."/>
            <person name="Grandi G."/>
            <person name="Madoff L.C."/>
            <person name="Kasper D.L."/>
            <person name="Telford J.L."/>
            <person name="Wessels M.R."/>
            <person name="Rappuoli R."/>
            <person name="Fraser C.M."/>
        </authorList>
    </citation>
    <scope>NUCLEOTIDE SEQUENCE [LARGE SCALE GENOMIC DNA]</scope>
    <source>
        <strain>ATCC 27591 / A909 / CDC SS700</strain>
    </source>
</reference>
<dbReference type="EC" id="2.7.2.1" evidence="1"/>
<dbReference type="EMBL" id="CP000114">
    <property type="protein sequence ID" value="ABA45194.1"/>
    <property type="molecule type" value="Genomic_DNA"/>
</dbReference>
<dbReference type="RefSeq" id="WP_000047534.1">
    <property type="nucleotide sequence ID" value="NC_007432.1"/>
</dbReference>
<dbReference type="SMR" id="Q3K3K1"/>
<dbReference type="KEGG" id="sak:SAK_0234"/>
<dbReference type="HOGENOM" id="CLU_020352_0_1_9"/>
<dbReference type="UniPathway" id="UPA00340">
    <property type="reaction ID" value="UER00458"/>
</dbReference>
<dbReference type="GO" id="GO:0005737">
    <property type="term" value="C:cytoplasm"/>
    <property type="evidence" value="ECO:0007669"/>
    <property type="project" value="UniProtKB-SubCell"/>
</dbReference>
<dbReference type="GO" id="GO:0008776">
    <property type="term" value="F:acetate kinase activity"/>
    <property type="evidence" value="ECO:0007669"/>
    <property type="project" value="UniProtKB-UniRule"/>
</dbReference>
<dbReference type="GO" id="GO:0005524">
    <property type="term" value="F:ATP binding"/>
    <property type="evidence" value="ECO:0007669"/>
    <property type="project" value="UniProtKB-KW"/>
</dbReference>
<dbReference type="GO" id="GO:0000287">
    <property type="term" value="F:magnesium ion binding"/>
    <property type="evidence" value="ECO:0007669"/>
    <property type="project" value="UniProtKB-UniRule"/>
</dbReference>
<dbReference type="GO" id="GO:0006083">
    <property type="term" value="P:acetate metabolic process"/>
    <property type="evidence" value="ECO:0007669"/>
    <property type="project" value="TreeGrafter"/>
</dbReference>
<dbReference type="GO" id="GO:0006085">
    <property type="term" value="P:acetyl-CoA biosynthetic process"/>
    <property type="evidence" value="ECO:0007669"/>
    <property type="project" value="UniProtKB-UniRule"/>
</dbReference>
<dbReference type="CDD" id="cd24010">
    <property type="entry name" value="ASKHA_NBD_AcK_PK"/>
    <property type="match status" value="1"/>
</dbReference>
<dbReference type="Gene3D" id="3.30.420.40">
    <property type="match status" value="2"/>
</dbReference>
<dbReference type="HAMAP" id="MF_00020">
    <property type="entry name" value="Acetate_kinase"/>
    <property type="match status" value="1"/>
</dbReference>
<dbReference type="InterPro" id="IPR004372">
    <property type="entry name" value="Ac/propionate_kinase"/>
</dbReference>
<dbReference type="InterPro" id="IPR000890">
    <property type="entry name" value="Aliphatic_acid_kin_short-chain"/>
</dbReference>
<dbReference type="InterPro" id="IPR023865">
    <property type="entry name" value="Aliphatic_acid_kinase_CS"/>
</dbReference>
<dbReference type="InterPro" id="IPR043129">
    <property type="entry name" value="ATPase_NBD"/>
</dbReference>
<dbReference type="NCBIfam" id="TIGR00016">
    <property type="entry name" value="ackA"/>
    <property type="match status" value="1"/>
</dbReference>
<dbReference type="PANTHER" id="PTHR21060">
    <property type="entry name" value="ACETATE KINASE"/>
    <property type="match status" value="1"/>
</dbReference>
<dbReference type="PANTHER" id="PTHR21060:SF15">
    <property type="entry name" value="ACETATE KINASE-RELATED"/>
    <property type="match status" value="1"/>
</dbReference>
<dbReference type="Pfam" id="PF00871">
    <property type="entry name" value="Acetate_kinase"/>
    <property type="match status" value="1"/>
</dbReference>
<dbReference type="PIRSF" id="PIRSF000722">
    <property type="entry name" value="Acetate_prop_kin"/>
    <property type="match status" value="1"/>
</dbReference>
<dbReference type="PRINTS" id="PR00471">
    <property type="entry name" value="ACETATEKNASE"/>
</dbReference>
<dbReference type="SUPFAM" id="SSF53067">
    <property type="entry name" value="Actin-like ATPase domain"/>
    <property type="match status" value="2"/>
</dbReference>
<dbReference type="PROSITE" id="PS01075">
    <property type="entry name" value="ACETATE_KINASE_1"/>
    <property type="match status" value="1"/>
</dbReference>
<dbReference type="PROSITE" id="PS01076">
    <property type="entry name" value="ACETATE_KINASE_2"/>
    <property type="match status" value="1"/>
</dbReference>
<protein>
    <recommendedName>
        <fullName evidence="1">Acetate kinase</fullName>
        <ecNumber evidence="1">2.7.2.1</ecNumber>
    </recommendedName>
    <alternativeName>
        <fullName evidence="1">Acetokinase</fullName>
    </alternativeName>
</protein>
<sequence length="397" mass="43452">MSKTIAINAGSSSLKWQLYEMPEEKVVAKGIIERIGLKDSISTVKFDDKKDEQILDIVDHTQAVKILLEDLTKHGIIKDFNEITGVGHRVVAGGEYFKESALVDDKVVEQVEELSALAPLHNPAAAAGIRAFREILPDITSVCVFDTAFHTTMQPHTYLYPIPQKYYTDYKVRKYGAHGTSHQYVAQEAAKQLGRPLEELKLITAHVGNGVSITANYHGQSIDTSMGFTPLAGPMMGTRSGDIDPAIIPYLVANDPELEDAAAVVNMLNKQSGLLGVSGTSSDMRDIEAGLQSKDPNAVLAYNVFIDRIKKFIGQYLAVLNGADAIIFTAGMGENAPLMRQDVIAGLSWFGIELDPEKNVFGYFGDITKPDSKVKVLVIPTDEELMIARDVERLKAK</sequence>
<evidence type="ECO:0000255" key="1">
    <source>
        <dbReference type="HAMAP-Rule" id="MF_00020"/>
    </source>
</evidence>
<organism>
    <name type="scientific">Streptococcus agalactiae serotype Ia (strain ATCC 27591 / A909 / CDC SS700)</name>
    <dbReference type="NCBI Taxonomy" id="205921"/>
    <lineage>
        <taxon>Bacteria</taxon>
        <taxon>Bacillati</taxon>
        <taxon>Bacillota</taxon>
        <taxon>Bacilli</taxon>
        <taxon>Lactobacillales</taxon>
        <taxon>Streptococcaceae</taxon>
        <taxon>Streptococcus</taxon>
    </lineage>
</organism>
<accession>Q3K3K1</accession>
<proteinExistence type="inferred from homology"/>
<keyword id="KW-0067">ATP-binding</keyword>
<keyword id="KW-0963">Cytoplasm</keyword>
<keyword id="KW-0418">Kinase</keyword>
<keyword id="KW-0460">Magnesium</keyword>
<keyword id="KW-0479">Metal-binding</keyword>
<keyword id="KW-0547">Nucleotide-binding</keyword>
<keyword id="KW-0808">Transferase</keyword>
<name>ACKA_STRA1</name>
<comment type="function">
    <text evidence="1">Catalyzes the formation of acetyl phosphate from acetate and ATP. Can also catalyze the reverse reaction.</text>
</comment>
<comment type="catalytic activity">
    <reaction evidence="1">
        <text>acetate + ATP = acetyl phosphate + ADP</text>
        <dbReference type="Rhea" id="RHEA:11352"/>
        <dbReference type="ChEBI" id="CHEBI:22191"/>
        <dbReference type="ChEBI" id="CHEBI:30089"/>
        <dbReference type="ChEBI" id="CHEBI:30616"/>
        <dbReference type="ChEBI" id="CHEBI:456216"/>
        <dbReference type="EC" id="2.7.2.1"/>
    </reaction>
</comment>
<comment type="cofactor">
    <cofactor evidence="1">
        <name>Mg(2+)</name>
        <dbReference type="ChEBI" id="CHEBI:18420"/>
    </cofactor>
    <cofactor evidence="1">
        <name>Mn(2+)</name>
        <dbReference type="ChEBI" id="CHEBI:29035"/>
    </cofactor>
    <text evidence="1">Mg(2+). Can also accept Mn(2+).</text>
</comment>
<comment type="pathway">
    <text evidence="1">Metabolic intermediate biosynthesis; acetyl-CoA biosynthesis; acetyl-CoA from acetate: step 1/2.</text>
</comment>
<comment type="subunit">
    <text evidence="1">Homodimer.</text>
</comment>
<comment type="subcellular location">
    <subcellularLocation>
        <location evidence="1">Cytoplasm</location>
    </subcellularLocation>
</comment>
<comment type="similarity">
    <text evidence="1">Belongs to the acetokinase family.</text>
</comment>
<feature type="chain" id="PRO_1000002268" description="Acetate kinase">
    <location>
        <begin position="1"/>
        <end position="397"/>
    </location>
</feature>
<feature type="active site" description="Proton donor/acceptor" evidence="1">
    <location>
        <position position="146"/>
    </location>
</feature>
<feature type="binding site" evidence="1">
    <location>
        <position position="8"/>
    </location>
    <ligand>
        <name>Mg(2+)</name>
        <dbReference type="ChEBI" id="CHEBI:18420"/>
    </ligand>
</feature>
<feature type="binding site" evidence="1">
    <location>
        <position position="15"/>
    </location>
    <ligand>
        <name>ATP</name>
        <dbReference type="ChEBI" id="CHEBI:30616"/>
    </ligand>
</feature>
<feature type="binding site" evidence="1">
    <location>
        <position position="89"/>
    </location>
    <ligand>
        <name>substrate</name>
    </ligand>
</feature>
<feature type="binding site" evidence="1">
    <location>
        <begin position="206"/>
        <end position="210"/>
    </location>
    <ligand>
        <name>ATP</name>
        <dbReference type="ChEBI" id="CHEBI:30616"/>
    </ligand>
</feature>
<feature type="binding site" evidence="1">
    <location>
        <begin position="283"/>
        <end position="285"/>
    </location>
    <ligand>
        <name>ATP</name>
        <dbReference type="ChEBI" id="CHEBI:30616"/>
    </ligand>
</feature>
<feature type="binding site" evidence="1">
    <location>
        <begin position="331"/>
        <end position="335"/>
    </location>
    <ligand>
        <name>ATP</name>
        <dbReference type="ChEBI" id="CHEBI:30616"/>
    </ligand>
</feature>
<feature type="binding site" evidence="1">
    <location>
        <position position="383"/>
    </location>
    <ligand>
        <name>Mg(2+)</name>
        <dbReference type="ChEBI" id="CHEBI:18420"/>
    </ligand>
</feature>
<feature type="site" description="Transition state stabilizer" evidence="1">
    <location>
        <position position="178"/>
    </location>
</feature>
<feature type="site" description="Transition state stabilizer" evidence="1">
    <location>
        <position position="239"/>
    </location>
</feature>
<gene>
    <name evidence="1" type="primary">ackA</name>
    <name type="ordered locus">SAK_0234</name>
</gene>